<sequence length="434" mass="47899">MEKSVNVIGAGLAGSEAVWQLVNRGVKVDLYEMRPVKQTPAHHTDKFAELVCTNSLRANGLTNAVGVIKEEMRMLDSIIIEAADKASVPAGGALAVDRHEFSGYITDKVKNHPLVTVHTEEVTTIPEGPTIIATGPLTSPALADEIKQLTGEEYLYFYDAAAPIIEKDSIDMDKVYLKSRYDKGEAAYLNCPMSEEEFNAFYEALVTAETAALKEFEKEVFFEGCMPIEVMAKRGIKTMLFGPLKPVGLEDPKTGKRPYAVLQLRQDDAAGTLYNMVGFQTHLKWGEQKRVFGMIPGLENAEIVRYGVMHRNTFINSPTVLEPTYQLKTRNDLFFAGQMTGVEGYVESAASGLAAGINAANFIQEKELVVFPTETAIGSLAHYITSASKKSFQPMNVNFGLFPELETKIRAKQERNEKLAERALNAIKKVAEEL</sequence>
<feature type="chain" id="PRO_0000117251" description="Methylenetetrahydrofolate--tRNA-(uracil-5-)-methyltransferase TrmFO">
    <location>
        <begin position="1"/>
        <end position="434"/>
    </location>
</feature>
<feature type="binding site" evidence="1">
    <location>
        <begin position="9"/>
        <end position="14"/>
    </location>
    <ligand>
        <name>FAD</name>
        <dbReference type="ChEBI" id="CHEBI:57692"/>
    </ligand>
</feature>
<protein>
    <recommendedName>
        <fullName evidence="1">Methylenetetrahydrofolate--tRNA-(uracil-5-)-methyltransferase TrmFO</fullName>
        <ecNumber evidence="1">2.1.1.74</ecNumber>
    </recommendedName>
    <alternativeName>
        <fullName evidence="1">Folate-dependent tRNA (uracil-5-)-methyltransferase</fullName>
    </alternativeName>
    <alternativeName>
        <fullName evidence="1">Folate-dependent tRNA(M-5-U54)-methyltransferase</fullName>
    </alternativeName>
</protein>
<accession>Q8Y7K1</accession>
<proteinExistence type="inferred from homology"/>
<dbReference type="EC" id="2.1.1.74" evidence="1"/>
<dbReference type="EMBL" id="AL591978">
    <property type="protein sequence ID" value="CAC99354.1"/>
    <property type="molecule type" value="Genomic_DNA"/>
</dbReference>
<dbReference type="PIR" id="AD1234">
    <property type="entry name" value="AD1234"/>
</dbReference>
<dbReference type="RefSeq" id="NP_464801.1">
    <property type="nucleotide sequence ID" value="NC_003210.1"/>
</dbReference>
<dbReference type="RefSeq" id="WP_010989721.1">
    <property type="nucleotide sequence ID" value="NZ_CP149495.1"/>
</dbReference>
<dbReference type="SMR" id="Q8Y7K1"/>
<dbReference type="STRING" id="169963.gene:17593933"/>
<dbReference type="PaxDb" id="169963-lmo1276"/>
<dbReference type="EnsemblBacteria" id="CAC99354">
    <property type="protein sequence ID" value="CAC99354"/>
    <property type="gene ID" value="CAC99354"/>
</dbReference>
<dbReference type="GeneID" id="985107"/>
<dbReference type="KEGG" id="lmo:lmo1276"/>
<dbReference type="PATRIC" id="fig|169963.11.peg.1311"/>
<dbReference type="eggNOG" id="COG1206">
    <property type="taxonomic scope" value="Bacteria"/>
</dbReference>
<dbReference type="HOGENOM" id="CLU_033057_1_0_9"/>
<dbReference type="OrthoDB" id="9803114at2"/>
<dbReference type="PhylomeDB" id="Q8Y7K1"/>
<dbReference type="BioCyc" id="LMON169963:LMO1276-MONOMER"/>
<dbReference type="Proteomes" id="UP000000817">
    <property type="component" value="Chromosome"/>
</dbReference>
<dbReference type="GO" id="GO:0005829">
    <property type="term" value="C:cytosol"/>
    <property type="evidence" value="ECO:0000318"/>
    <property type="project" value="GO_Central"/>
</dbReference>
<dbReference type="GO" id="GO:0050660">
    <property type="term" value="F:flavin adenine dinucleotide binding"/>
    <property type="evidence" value="ECO:0000318"/>
    <property type="project" value="GO_Central"/>
</dbReference>
<dbReference type="GO" id="GO:0047151">
    <property type="term" value="F:tRNA (uracil(54)-C5)-methyltransferase activity, 5,10-methylenetetrahydrofolate-dependent"/>
    <property type="evidence" value="ECO:0007669"/>
    <property type="project" value="UniProtKB-UniRule"/>
</dbReference>
<dbReference type="GO" id="GO:0030488">
    <property type="term" value="P:tRNA methylation"/>
    <property type="evidence" value="ECO:0000318"/>
    <property type="project" value="GO_Central"/>
</dbReference>
<dbReference type="GO" id="GO:0002098">
    <property type="term" value="P:tRNA wobble uridine modification"/>
    <property type="evidence" value="ECO:0000318"/>
    <property type="project" value="GO_Central"/>
</dbReference>
<dbReference type="FunFam" id="3.50.50.60:FF:000035">
    <property type="entry name" value="Methylenetetrahydrofolate--tRNA-(uracil-5-)-methyltransferase TrmFO"/>
    <property type="match status" value="1"/>
</dbReference>
<dbReference type="FunFam" id="3.50.50.60:FF:000040">
    <property type="entry name" value="Methylenetetrahydrofolate--tRNA-(uracil-5-)-methyltransferase TrmFO"/>
    <property type="match status" value="1"/>
</dbReference>
<dbReference type="Gene3D" id="3.50.50.60">
    <property type="entry name" value="FAD/NAD(P)-binding domain"/>
    <property type="match status" value="2"/>
</dbReference>
<dbReference type="HAMAP" id="MF_01037">
    <property type="entry name" value="TrmFO"/>
    <property type="match status" value="1"/>
</dbReference>
<dbReference type="InterPro" id="IPR036188">
    <property type="entry name" value="FAD/NAD-bd_sf"/>
</dbReference>
<dbReference type="InterPro" id="IPR002218">
    <property type="entry name" value="MnmG-rel"/>
</dbReference>
<dbReference type="InterPro" id="IPR020595">
    <property type="entry name" value="MnmG-rel_CS"/>
</dbReference>
<dbReference type="InterPro" id="IPR040131">
    <property type="entry name" value="MnmG_N"/>
</dbReference>
<dbReference type="InterPro" id="IPR004417">
    <property type="entry name" value="TrmFO"/>
</dbReference>
<dbReference type="NCBIfam" id="TIGR00137">
    <property type="entry name" value="gid_trmFO"/>
    <property type="match status" value="1"/>
</dbReference>
<dbReference type="NCBIfam" id="NF003739">
    <property type="entry name" value="PRK05335.1"/>
    <property type="match status" value="1"/>
</dbReference>
<dbReference type="PANTHER" id="PTHR11806">
    <property type="entry name" value="GLUCOSE INHIBITED DIVISION PROTEIN A"/>
    <property type="match status" value="1"/>
</dbReference>
<dbReference type="PANTHER" id="PTHR11806:SF2">
    <property type="entry name" value="METHYLENETETRAHYDROFOLATE--TRNA-(URACIL-5-)-METHYLTRANSFERASE TRMFO"/>
    <property type="match status" value="1"/>
</dbReference>
<dbReference type="Pfam" id="PF01134">
    <property type="entry name" value="GIDA"/>
    <property type="match status" value="1"/>
</dbReference>
<dbReference type="SUPFAM" id="SSF51905">
    <property type="entry name" value="FAD/NAD(P)-binding domain"/>
    <property type="match status" value="1"/>
</dbReference>
<dbReference type="PROSITE" id="PS01281">
    <property type="entry name" value="GIDA_2"/>
    <property type="match status" value="1"/>
</dbReference>
<organism>
    <name type="scientific">Listeria monocytogenes serovar 1/2a (strain ATCC BAA-679 / EGD-e)</name>
    <dbReference type="NCBI Taxonomy" id="169963"/>
    <lineage>
        <taxon>Bacteria</taxon>
        <taxon>Bacillati</taxon>
        <taxon>Bacillota</taxon>
        <taxon>Bacilli</taxon>
        <taxon>Bacillales</taxon>
        <taxon>Listeriaceae</taxon>
        <taxon>Listeria</taxon>
    </lineage>
</organism>
<name>TRMFO_LISMO</name>
<gene>
    <name evidence="1" type="primary">trmFO</name>
    <name type="synonym">gid</name>
    <name type="ordered locus">lmo1276</name>
</gene>
<reference key="1">
    <citation type="journal article" date="2001" name="Science">
        <title>Comparative genomics of Listeria species.</title>
        <authorList>
            <person name="Glaser P."/>
            <person name="Frangeul L."/>
            <person name="Buchrieser C."/>
            <person name="Rusniok C."/>
            <person name="Amend A."/>
            <person name="Baquero F."/>
            <person name="Berche P."/>
            <person name="Bloecker H."/>
            <person name="Brandt P."/>
            <person name="Chakraborty T."/>
            <person name="Charbit A."/>
            <person name="Chetouani F."/>
            <person name="Couve E."/>
            <person name="de Daruvar A."/>
            <person name="Dehoux P."/>
            <person name="Domann E."/>
            <person name="Dominguez-Bernal G."/>
            <person name="Duchaud E."/>
            <person name="Durant L."/>
            <person name="Dussurget O."/>
            <person name="Entian K.-D."/>
            <person name="Fsihi H."/>
            <person name="Garcia-del Portillo F."/>
            <person name="Garrido P."/>
            <person name="Gautier L."/>
            <person name="Goebel W."/>
            <person name="Gomez-Lopez N."/>
            <person name="Hain T."/>
            <person name="Hauf J."/>
            <person name="Jackson D."/>
            <person name="Jones L.-M."/>
            <person name="Kaerst U."/>
            <person name="Kreft J."/>
            <person name="Kuhn M."/>
            <person name="Kunst F."/>
            <person name="Kurapkat G."/>
            <person name="Madueno E."/>
            <person name="Maitournam A."/>
            <person name="Mata Vicente J."/>
            <person name="Ng E."/>
            <person name="Nedjari H."/>
            <person name="Nordsiek G."/>
            <person name="Novella S."/>
            <person name="de Pablos B."/>
            <person name="Perez-Diaz J.-C."/>
            <person name="Purcell R."/>
            <person name="Remmel B."/>
            <person name="Rose M."/>
            <person name="Schlueter T."/>
            <person name="Simoes N."/>
            <person name="Tierrez A."/>
            <person name="Vazquez-Boland J.-A."/>
            <person name="Voss H."/>
            <person name="Wehland J."/>
            <person name="Cossart P."/>
        </authorList>
    </citation>
    <scope>NUCLEOTIDE SEQUENCE [LARGE SCALE GENOMIC DNA]</scope>
    <source>
        <strain>ATCC BAA-679 / EGD-e</strain>
    </source>
</reference>
<keyword id="KW-0963">Cytoplasm</keyword>
<keyword id="KW-0274">FAD</keyword>
<keyword id="KW-0285">Flavoprotein</keyword>
<keyword id="KW-0489">Methyltransferase</keyword>
<keyword id="KW-0520">NAD</keyword>
<keyword id="KW-0521">NADP</keyword>
<keyword id="KW-1185">Reference proteome</keyword>
<keyword id="KW-0808">Transferase</keyword>
<keyword id="KW-0819">tRNA processing</keyword>
<comment type="function">
    <text evidence="1">Catalyzes the folate-dependent formation of 5-methyl-uridine at position 54 (M-5-U54) in all tRNAs.</text>
</comment>
<comment type="catalytic activity">
    <reaction evidence="1">
        <text>uridine(54) in tRNA + (6R)-5,10-methylene-5,6,7,8-tetrahydrofolate + NADH + H(+) = 5-methyluridine(54) in tRNA + (6S)-5,6,7,8-tetrahydrofolate + NAD(+)</text>
        <dbReference type="Rhea" id="RHEA:16873"/>
        <dbReference type="Rhea" id="RHEA-COMP:10167"/>
        <dbReference type="Rhea" id="RHEA-COMP:10193"/>
        <dbReference type="ChEBI" id="CHEBI:15378"/>
        <dbReference type="ChEBI" id="CHEBI:15636"/>
        <dbReference type="ChEBI" id="CHEBI:57453"/>
        <dbReference type="ChEBI" id="CHEBI:57540"/>
        <dbReference type="ChEBI" id="CHEBI:57945"/>
        <dbReference type="ChEBI" id="CHEBI:65315"/>
        <dbReference type="ChEBI" id="CHEBI:74447"/>
        <dbReference type="EC" id="2.1.1.74"/>
    </reaction>
</comment>
<comment type="catalytic activity">
    <reaction evidence="1">
        <text>uridine(54) in tRNA + (6R)-5,10-methylene-5,6,7,8-tetrahydrofolate + NADPH + H(+) = 5-methyluridine(54) in tRNA + (6S)-5,6,7,8-tetrahydrofolate + NADP(+)</text>
        <dbReference type="Rhea" id="RHEA:62372"/>
        <dbReference type="Rhea" id="RHEA-COMP:10167"/>
        <dbReference type="Rhea" id="RHEA-COMP:10193"/>
        <dbReference type="ChEBI" id="CHEBI:15378"/>
        <dbReference type="ChEBI" id="CHEBI:15636"/>
        <dbReference type="ChEBI" id="CHEBI:57453"/>
        <dbReference type="ChEBI" id="CHEBI:57783"/>
        <dbReference type="ChEBI" id="CHEBI:58349"/>
        <dbReference type="ChEBI" id="CHEBI:65315"/>
        <dbReference type="ChEBI" id="CHEBI:74447"/>
        <dbReference type="EC" id="2.1.1.74"/>
    </reaction>
</comment>
<comment type="cofactor">
    <cofactor evidence="1">
        <name>FAD</name>
        <dbReference type="ChEBI" id="CHEBI:57692"/>
    </cofactor>
</comment>
<comment type="subcellular location">
    <subcellularLocation>
        <location evidence="1">Cytoplasm</location>
    </subcellularLocation>
</comment>
<comment type="similarity">
    <text evidence="1">Belongs to the MnmG family. TrmFO subfamily.</text>
</comment>
<evidence type="ECO:0000255" key="1">
    <source>
        <dbReference type="HAMAP-Rule" id="MF_01037"/>
    </source>
</evidence>